<dbReference type="EMBL" id="AL009126">
    <property type="protein sequence ID" value="CAB12490.1"/>
    <property type="molecule type" value="Genomic_DNA"/>
</dbReference>
<dbReference type="PIR" id="D69795">
    <property type="entry name" value="D69795"/>
</dbReference>
<dbReference type="RefSeq" id="NP_388552.1">
    <property type="nucleotide sequence ID" value="NC_000964.3"/>
</dbReference>
<dbReference type="RefSeq" id="WP_003243222.1">
    <property type="nucleotide sequence ID" value="NZ_OZ025638.1"/>
</dbReference>
<dbReference type="SMR" id="O31500"/>
<dbReference type="FunCoup" id="O31500">
    <property type="interactions" value="65"/>
</dbReference>
<dbReference type="STRING" id="224308.BSU06700"/>
<dbReference type="PaxDb" id="224308-BSU06700"/>
<dbReference type="EnsemblBacteria" id="CAB12490">
    <property type="protein sequence ID" value="CAB12490"/>
    <property type="gene ID" value="BSU_06700"/>
</dbReference>
<dbReference type="GeneID" id="939889"/>
<dbReference type="KEGG" id="bsu:BSU06700"/>
<dbReference type="PATRIC" id="fig|224308.179.peg.728"/>
<dbReference type="eggNOG" id="COG1309">
    <property type="taxonomic scope" value="Bacteria"/>
</dbReference>
<dbReference type="InParanoid" id="O31500"/>
<dbReference type="OrthoDB" id="9812993at2"/>
<dbReference type="PhylomeDB" id="O31500"/>
<dbReference type="BioCyc" id="BSUB:BSU06700-MONOMER"/>
<dbReference type="Proteomes" id="UP000001570">
    <property type="component" value="Chromosome"/>
</dbReference>
<dbReference type="GO" id="GO:0032993">
    <property type="term" value="C:protein-DNA complex"/>
    <property type="evidence" value="ECO:0000318"/>
    <property type="project" value="GO_Central"/>
</dbReference>
<dbReference type="GO" id="GO:0003677">
    <property type="term" value="F:DNA binding"/>
    <property type="evidence" value="ECO:0007669"/>
    <property type="project" value="UniProtKB-KW"/>
</dbReference>
<dbReference type="GO" id="GO:0003700">
    <property type="term" value="F:DNA-binding transcription factor activity"/>
    <property type="evidence" value="ECO:0000318"/>
    <property type="project" value="GO_Central"/>
</dbReference>
<dbReference type="FunFam" id="1.10.10.60:FF:000141">
    <property type="entry name" value="TetR family transcriptional regulator"/>
    <property type="match status" value="1"/>
</dbReference>
<dbReference type="Gene3D" id="1.10.357.10">
    <property type="entry name" value="Tetracycline Repressor, domain 2"/>
    <property type="match status" value="1"/>
</dbReference>
<dbReference type="InterPro" id="IPR023772">
    <property type="entry name" value="DNA-bd_HTH_TetR-type_CS"/>
</dbReference>
<dbReference type="InterPro" id="IPR009057">
    <property type="entry name" value="Homeodomain-like_sf"/>
</dbReference>
<dbReference type="InterPro" id="IPR050624">
    <property type="entry name" value="HTH-type_Tx_Regulator"/>
</dbReference>
<dbReference type="InterPro" id="IPR001647">
    <property type="entry name" value="HTH_TetR"/>
</dbReference>
<dbReference type="PANTHER" id="PTHR43479">
    <property type="entry name" value="ACREF/ENVCD OPERON REPRESSOR-RELATED"/>
    <property type="match status" value="1"/>
</dbReference>
<dbReference type="PANTHER" id="PTHR43479:SF22">
    <property type="entry name" value="TRANSCRIPTIONAL REGULATOR, TETR FAMILY"/>
    <property type="match status" value="1"/>
</dbReference>
<dbReference type="Pfam" id="PF00440">
    <property type="entry name" value="TetR_N"/>
    <property type="match status" value="1"/>
</dbReference>
<dbReference type="PRINTS" id="PR00455">
    <property type="entry name" value="HTHTETR"/>
</dbReference>
<dbReference type="SUPFAM" id="SSF46689">
    <property type="entry name" value="Homeodomain-like"/>
    <property type="match status" value="1"/>
</dbReference>
<dbReference type="PROSITE" id="PS01081">
    <property type="entry name" value="HTH_TETR_1"/>
    <property type="match status" value="1"/>
</dbReference>
<dbReference type="PROSITE" id="PS50977">
    <property type="entry name" value="HTH_TETR_2"/>
    <property type="match status" value="1"/>
</dbReference>
<proteinExistence type="predicted"/>
<evidence type="ECO:0000255" key="1">
    <source>
        <dbReference type="PROSITE-ProRule" id="PRU00335"/>
    </source>
</evidence>
<organism>
    <name type="scientific">Bacillus subtilis (strain 168)</name>
    <dbReference type="NCBI Taxonomy" id="224308"/>
    <lineage>
        <taxon>Bacteria</taxon>
        <taxon>Bacillati</taxon>
        <taxon>Bacillota</taxon>
        <taxon>Bacilli</taxon>
        <taxon>Bacillales</taxon>
        <taxon>Bacillaceae</taxon>
        <taxon>Bacillus</taxon>
    </lineage>
</organism>
<reference key="1">
    <citation type="journal article" date="1997" name="Nature">
        <title>The complete genome sequence of the Gram-positive bacterium Bacillus subtilis.</title>
        <authorList>
            <person name="Kunst F."/>
            <person name="Ogasawara N."/>
            <person name="Moszer I."/>
            <person name="Albertini A.M."/>
            <person name="Alloni G."/>
            <person name="Azevedo V."/>
            <person name="Bertero M.G."/>
            <person name="Bessieres P."/>
            <person name="Bolotin A."/>
            <person name="Borchert S."/>
            <person name="Borriss R."/>
            <person name="Boursier L."/>
            <person name="Brans A."/>
            <person name="Braun M."/>
            <person name="Brignell S.C."/>
            <person name="Bron S."/>
            <person name="Brouillet S."/>
            <person name="Bruschi C.V."/>
            <person name="Caldwell B."/>
            <person name="Capuano V."/>
            <person name="Carter N.M."/>
            <person name="Choi S.-K."/>
            <person name="Codani J.-J."/>
            <person name="Connerton I.F."/>
            <person name="Cummings N.J."/>
            <person name="Daniel R.A."/>
            <person name="Denizot F."/>
            <person name="Devine K.M."/>
            <person name="Duesterhoeft A."/>
            <person name="Ehrlich S.D."/>
            <person name="Emmerson P.T."/>
            <person name="Entian K.-D."/>
            <person name="Errington J."/>
            <person name="Fabret C."/>
            <person name="Ferrari E."/>
            <person name="Foulger D."/>
            <person name="Fritz C."/>
            <person name="Fujita M."/>
            <person name="Fujita Y."/>
            <person name="Fuma S."/>
            <person name="Galizzi A."/>
            <person name="Galleron N."/>
            <person name="Ghim S.-Y."/>
            <person name="Glaser P."/>
            <person name="Goffeau A."/>
            <person name="Golightly E.J."/>
            <person name="Grandi G."/>
            <person name="Guiseppi G."/>
            <person name="Guy B.J."/>
            <person name="Haga K."/>
            <person name="Haiech J."/>
            <person name="Harwood C.R."/>
            <person name="Henaut A."/>
            <person name="Hilbert H."/>
            <person name="Holsappel S."/>
            <person name="Hosono S."/>
            <person name="Hullo M.-F."/>
            <person name="Itaya M."/>
            <person name="Jones L.-M."/>
            <person name="Joris B."/>
            <person name="Karamata D."/>
            <person name="Kasahara Y."/>
            <person name="Klaerr-Blanchard M."/>
            <person name="Klein C."/>
            <person name="Kobayashi Y."/>
            <person name="Koetter P."/>
            <person name="Koningstein G."/>
            <person name="Krogh S."/>
            <person name="Kumano M."/>
            <person name="Kurita K."/>
            <person name="Lapidus A."/>
            <person name="Lardinois S."/>
            <person name="Lauber J."/>
            <person name="Lazarevic V."/>
            <person name="Lee S.-M."/>
            <person name="Levine A."/>
            <person name="Liu H."/>
            <person name="Masuda S."/>
            <person name="Mauel C."/>
            <person name="Medigue C."/>
            <person name="Medina N."/>
            <person name="Mellado R.P."/>
            <person name="Mizuno M."/>
            <person name="Moestl D."/>
            <person name="Nakai S."/>
            <person name="Noback M."/>
            <person name="Noone D."/>
            <person name="O'Reilly M."/>
            <person name="Ogawa K."/>
            <person name="Ogiwara A."/>
            <person name="Oudega B."/>
            <person name="Park S.-H."/>
            <person name="Parro V."/>
            <person name="Pohl T.M."/>
            <person name="Portetelle D."/>
            <person name="Porwollik S."/>
            <person name="Prescott A.M."/>
            <person name="Presecan E."/>
            <person name="Pujic P."/>
            <person name="Purnelle B."/>
            <person name="Rapoport G."/>
            <person name="Rey M."/>
            <person name="Reynolds S."/>
            <person name="Rieger M."/>
            <person name="Rivolta C."/>
            <person name="Rocha E."/>
            <person name="Roche B."/>
            <person name="Rose M."/>
            <person name="Sadaie Y."/>
            <person name="Sato T."/>
            <person name="Scanlan E."/>
            <person name="Schleich S."/>
            <person name="Schroeter R."/>
            <person name="Scoffone F."/>
            <person name="Sekiguchi J."/>
            <person name="Sekowska A."/>
            <person name="Seror S.J."/>
            <person name="Serror P."/>
            <person name="Shin B.-S."/>
            <person name="Soldo B."/>
            <person name="Sorokin A."/>
            <person name="Tacconi E."/>
            <person name="Takagi T."/>
            <person name="Takahashi H."/>
            <person name="Takemaru K."/>
            <person name="Takeuchi M."/>
            <person name="Tamakoshi A."/>
            <person name="Tanaka T."/>
            <person name="Terpstra P."/>
            <person name="Tognoni A."/>
            <person name="Tosato V."/>
            <person name="Uchiyama S."/>
            <person name="Vandenbol M."/>
            <person name="Vannier F."/>
            <person name="Vassarotti A."/>
            <person name="Viari A."/>
            <person name="Wambutt R."/>
            <person name="Wedler E."/>
            <person name="Wedler H."/>
            <person name="Weitzenegger T."/>
            <person name="Winters P."/>
            <person name="Wipat A."/>
            <person name="Yamamoto H."/>
            <person name="Yamane K."/>
            <person name="Yasumoto K."/>
            <person name="Yata K."/>
            <person name="Yoshida K."/>
            <person name="Yoshikawa H.-F."/>
            <person name="Zumstein E."/>
            <person name="Yoshikawa H."/>
            <person name="Danchin A."/>
        </authorList>
    </citation>
    <scope>NUCLEOTIDE SEQUENCE [LARGE SCALE GENOMIC DNA]</scope>
    <source>
        <strain>168</strain>
    </source>
</reference>
<reference key="2">
    <citation type="journal article" date="2005" name="Microbiol. Mol. Biol. Rev.">
        <title>The TetR family of transcriptional repressors.</title>
        <authorList>
            <person name="Ramos J.L."/>
            <person name="Martinez-Bueno M."/>
            <person name="Molina-Henares A.J."/>
            <person name="Teran W."/>
            <person name="Watanabe K."/>
            <person name="Zhang X."/>
            <person name="Gallegos M.T."/>
            <person name="Brennan R."/>
            <person name="Tobes R."/>
        </authorList>
    </citation>
    <scope>REVIEW</scope>
    <scope>GENE FAMILY</scope>
</reference>
<feature type="chain" id="PRO_0000070649" description="Uncharacterized HTH-type transcriptional regulator YerO">
    <location>
        <begin position="1"/>
        <end position="289"/>
    </location>
</feature>
<feature type="domain" description="HTH tetR-type" evidence="1">
    <location>
        <begin position="2"/>
        <end position="62"/>
    </location>
</feature>
<feature type="DNA-binding region" description="H-T-H motif" evidence="1">
    <location>
        <begin position="25"/>
        <end position="44"/>
    </location>
</feature>
<keyword id="KW-0238">DNA-binding</keyword>
<keyword id="KW-1185">Reference proteome</keyword>
<keyword id="KW-0678">Repressor</keyword>
<keyword id="KW-0804">Transcription</keyword>
<keyword id="KW-0805">Transcription regulation</keyword>
<accession>O31500</accession>
<protein>
    <recommendedName>
        <fullName>Uncharacterized HTH-type transcriptional regulator YerO</fullName>
    </recommendedName>
</protein>
<sequence>MNEKKERIIKTSIRLFAKKGFAATTIQEIASECGISKGAFYLHFKSKEALLLSACEYYIGMSMNKMKNIEEDLAGKPPKEVLKKQIGAQFEDFRDHKDFIVLLLTENIIPENQEIKQYFYKVTMETDKLYRNALLVSYGEGIERYVADLSIMARGIVHSYMNVMVFNGELNIDAEEISAFIIERLDDLVQGLSRSALNPIVSKDIFNPMPAGKDQLLEDIQKVKENSTLPEDITVSLDVIEEELTQDKPRKPIIKGMLSNLAGTNDKEVERLRALILSLSQFDHKKSSL</sequence>
<gene>
    <name type="primary">yerO</name>
    <name type="ordered locus">BSU06700</name>
</gene>
<name>YERO_BACSU</name>